<organism>
    <name type="scientific">Homo sapiens</name>
    <name type="common">Human</name>
    <dbReference type="NCBI Taxonomy" id="9606"/>
    <lineage>
        <taxon>Eukaryota</taxon>
        <taxon>Metazoa</taxon>
        <taxon>Chordata</taxon>
        <taxon>Craniata</taxon>
        <taxon>Vertebrata</taxon>
        <taxon>Euteleostomi</taxon>
        <taxon>Mammalia</taxon>
        <taxon>Eutheria</taxon>
        <taxon>Euarchontoglires</taxon>
        <taxon>Primates</taxon>
        <taxon>Haplorrhini</taxon>
        <taxon>Catarrhini</taxon>
        <taxon>Hominidae</taxon>
        <taxon>Homo</taxon>
    </lineage>
</organism>
<name>FIS1_HUMAN</name>
<feature type="chain" id="PRO_0000106393" description="Mitochondrial fission 1 protein">
    <location>
        <begin position="1"/>
        <end position="152"/>
    </location>
</feature>
<feature type="topological domain" description="Cytoplasmic" evidence="1">
    <location>
        <begin position="1"/>
        <end position="122"/>
    </location>
</feature>
<feature type="transmembrane region" description="Helical" evidence="1">
    <location>
        <begin position="123"/>
        <end position="143"/>
    </location>
</feature>
<feature type="topological domain" description="Mitochondrial intermembrane" evidence="1">
    <location>
        <begin position="144"/>
        <end position="152"/>
    </location>
</feature>
<feature type="repeat" description="TPR">
    <location>
        <begin position="71"/>
        <end position="104"/>
    </location>
</feature>
<feature type="modified residue" description="N-acetylmethionine" evidence="14 17 19">
    <location>
        <position position="1"/>
    </location>
</feature>
<feature type="modified residue" description="Phosphoserine" evidence="18">
    <location>
        <position position="10"/>
    </location>
</feature>
<feature type="mutagenesis site" description="Approximately 40% of cells display fragmented mitochondria." evidence="7">
    <original>L</original>
    <variation>P</variation>
    <location>
        <position position="14"/>
    </location>
</feature>
<feature type="mutagenesis site" description="Less than 15% of cells display fragmented mitochondria." evidence="7">
    <original>L</original>
    <variation>P</variation>
    <location>
        <position position="42"/>
    </location>
</feature>
<feature type="mutagenesis site" description="Less than 15% of cells display fragmented mitochondria." evidence="7">
    <original>L</original>
    <variation>P</variation>
    <location>
        <position position="58"/>
    </location>
</feature>
<feature type="mutagenesis site" description="Less than 15% of cells display fragmented mitochondria. Shows greatly reduced binding to DNM1L." evidence="7">
    <original>L</original>
    <variation>P</variation>
    <location>
        <position position="77"/>
    </location>
</feature>
<feature type="mutagenesis site" description="Less than 15% of cells display fragmented mitochondria. Shows greatly reduced binding to DNM1L." evidence="7">
    <original>L</original>
    <variation>P</variation>
    <location>
        <position position="91"/>
    </location>
</feature>
<feature type="mutagenesis site" description="Approximately 40% of cells display fragmented mitochondria. No change in binding to DNM1L." evidence="7">
    <original>L</original>
    <variation>P</variation>
    <location>
        <position position="110"/>
    </location>
</feature>
<feature type="mutagenesis site" description="Protein localizes to both mitochondrion and endoplasmic reticulum. Protein localizes to endoplasmic reticulum only; when associated with A-151." evidence="5">
    <original>K</original>
    <variation>A</variation>
    <location>
        <position position="149"/>
    </location>
</feature>
<feature type="mutagenesis site" description="Protein localizes to both mitochondrion and endoplasmic reticulum. Protein localizes to endoplasmic reticulum only; when associated with A-149." evidence="5">
    <original>K</original>
    <variation>A</variation>
    <location>
        <position position="151"/>
    </location>
</feature>
<feature type="sequence conflict" description="In Ref. 1; AAD34130." evidence="15" ref="1">
    <original>SK</original>
    <variation>TR</variation>
    <location>
        <begin position="45"/>
        <end position="46"/>
    </location>
</feature>
<feature type="helix" evidence="21">
    <location>
        <begin position="1"/>
        <end position="5"/>
    </location>
</feature>
<feature type="helix" evidence="21">
    <location>
        <begin position="11"/>
        <end position="27"/>
    </location>
</feature>
<feature type="helix" evidence="21">
    <location>
        <begin position="32"/>
        <end position="42"/>
    </location>
</feature>
<feature type="strand" evidence="21">
    <location>
        <begin position="45"/>
        <end position="47"/>
    </location>
</feature>
<feature type="helix" evidence="21">
    <location>
        <begin position="48"/>
        <end position="61"/>
    </location>
</feature>
<feature type="helix" evidence="21">
    <location>
        <begin position="62"/>
        <end position="64"/>
    </location>
</feature>
<feature type="helix" evidence="21">
    <location>
        <begin position="67"/>
        <end position="83"/>
    </location>
</feature>
<feature type="helix" evidence="21">
    <location>
        <begin position="87"/>
        <end position="100"/>
    </location>
</feature>
<feature type="helix" evidence="21">
    <location>
        <begin position="105"/>
        <end position="120"/>
    </location>
</feature>
<feature type="strand" evidence="20">
    <location>
        <begin position="129"/>
        <end position="133"/>
    </location>
</feature>
<feature type="strand" evidence="20">
    <location>
        <begin position="142"/>
        <end position="144"/>
    </location>
</feature>
<comment type="function">
    <text evidence="2 3 5 6 7 11 12 13">Involved in the fragmentation of the mitochondrial network and its perinuclear clustering (PubMed:12783892, PubMed:12861026, PubMed:14996942, PubMed:23283981). Plays a minor role in the recruitment and association of the fission mediator dynamin-related protein 1 (DNM1L) to the mitochondrial surface and mitochondrial fission (PubMed:12861026, PubMed:16118244, PubMed:23283981, PubMed:23530241, PubMed:24196833). May not be essential for the assembly of functional fission complexes and the subsequent membrane scission event (PubMed:23530241, PubMed:24196833). Also mediates peroxisomal fission (PubMed:16107562). May act when the products of fission are directed toward mitochondrial homeostasis, mitophagy, or apoptosis (PubMed:24196833). Can induce cytochrome c release from the mitochondrion to the cytosol, ultimately leading to apoptosis (PubMed:12783892).</text>
</comment>
<comment type="subunit">
    <text evidence="3 7 8 9 10 13">Interacts with DNM1L/DLP1 through the TPR region; may form part of a larger protein complex at the endoplasmic reticulum-mitochondrial interface during mitochondrial fission (PubMed:12861026, PubMed:16118244, PubMed:24196833). Interacts with MARCHF5 (PubMed:16874301). Interacts with MIEF1 (PubMed:21701560). Interacts with PEX11A, PEX11B and PEX11G (PubMed:20826455).</text>
</comment>
<comment type="interaction">
    <interactant intactId="EBI-3385283">
        <id>Q9Y3D6</id>
    </interactant>
    <interactant intactId="EBI-3916106">
        <id>Q9BV23</id>
        <label>ABHD6</label>
    </interactant>
    <organismsDiffer>false</organismsDiffer>
    <experiments>3</experiments>
</comment>
<comment type="interaction">
    <interactant intactId="EBI-3385283">
        <id>Q9Y3D6</id>
    </interactant>
    <interactant intactId="EBI-2606935">
        <id>Q96BI3</id>
        <label>APH1A</label>
    </interactant>
    <organismsDiffer>false</organismsDiffer>
    <experiments>3</experiments>
</comment>
<comment type="interaction">
    <interactant intactId="EBI-3385283">
        <id>Q9Y3D6</id>
    </interactant>
    <interactant intactId="EBI-77683">
        <id>P51572</id>
        <label>BCAP31</label>
    </interactant>
    <organismsDiffer>false</organismsDiffer>
    <experiments>8</experiments>
</comment>
<comment type="interaction">
    <interactant intactId="EBI-3385283">
        <id>Q9Y3D6</id>
    </interactant>
    <interactant intactId="EBI-724571">
        <id>O00429</id>
        <label>DNM1L</label>
    </interactant>
    <organismsDiffer>false</organismsDiffer>
    <experiments>2</experiments>
</comment>
<comment type="interaction">
    <interactant intactId="EBI-3385283">
        <id>Q9Y3D6</id>
    </interactant>
    <interactant intactId="EBI-3915253">
        <id>Q15125</id>
        <label>EBP</label>
    </interactant>
    <organismsDiffer>false</organismsDiffer>
    <experiments>3</experiments>
</comment>
<comment type="interaction">
    <interactant intactId="EBI-3385283">
        <id>Q9Y3D6</id>
    </interactant>
    <interactant intactId="EBI-781551">
        <id>Q9Y282</id>
        <label>ERGIC3</label>
    </interactant>
    <organismsDiffer>false</organismsDiffer>
    <experiments>3</experiments>
</comment>
<comment type="interaction">
    <interactant intactId="EBI-3385283">
        <id>Q9Y3D6</id>
    </interactant>
    <interactant intactId="EBI-18304435">
        <id>Q5JX71</id>
        <label>FAM209A</label>
    </interactant>
    <organismsDiffer>false</organismsDiffer>
    <experiments>3</experiments>
</comment>
<comment type="interaction">
    <interactant intactId="EBI-3385283">
        <id>Q9Y3D6</id>
    </interactant>
    <interactant intactId="EBI-18938272">
        <id>Q96KR6</id>
        <label>FAM210B</label>
    </interactant>
    <organismsDiffer>false</organismsDiffer>
    <experiments>3</experiments>
</comment>
<comment type="interaction">
    <interactant intactId="EBI-3385283">
        <id>Q9Y3D6</id>
    </interactant>
    <interactant intactId="EBI-2833872">
        <id>O15552</id>
        <label>FFAR2</label>
    </interactant>
    <organismsDiffer>false</organismsDiffer>
    <experiments>3</experiments>
</comment>
<comment type="interaction">
    <interactant intactId="EBI-3385283">
        <id>Q9Y3D6</id>
    </interactant>
    <interactant intactId="EBI-10266796">
        <id>Q8N5M9</id>
        <label>JAGN1</label>
    </interactant>
    <organismsDiffer>false</organismsDiffer>
    <experiments>3</experiments>
</comment>
<comment type="interaction">
    <interactant intactId="EBI-3385283">
        <id>Q9Y3D6</id>
    </interactant>
    <interactant intactId="EBI-749265">
        <id>Q8N6L0</id>
        <label>KASH5</label>
    </interactant>
    <organismsDiffer>false</organismsDiffer>
    <experiments>3</experiments>
</comment>
<comment type="interaction">
    <interactant intactId="EBI-3385283">
        <id>Q9Y3D6</id>
    </interactant>
    <interactant intactId="EBI-12017638">
        <id>P48051</id>
        <label>KCNJ6</label>
    </interactant>
    <organismsDiffer>false</organismsDiffer>
    <experiments>3</experiments>
</comment>
<comment type="interaction">
    <interactant intactId="EBI-3385283">
        <id>Q9Y3D6</id>
    </interactant>
    <interactant intactId="EBI-740987">
        <id>Q9NQG6</id>
        <label>MIEF1</label>
    </interactant>
    <organismsDiffer>false</organismsDiffer>
    <experiments>4</experiments>
</comment>
<comment type="interaction">
    <interactant intactId="EBI-3385283">
        <id>Q9Y3D6</id>
    </interactant>
    <interactant intactId="EBI-6163737">
        <id>Q8N4V1</id>
        <label>MMGT1</label>
    </interactant>
    <organismsDiffer>false</organismsDiffer>
    <experiments>3</experiments>
</comment>
<comment type="interaction">
    <interactant intactId="EBI-3385283">
        <id>Q9Y3D6</id>
    </interactant>
    <interactant intactId="EBI-7445625">
        <id>Q9HC29</id>
        <label>NOD2</label>
    </interactant>
    <organismsDiffer>false</organismsDiffer>
    <experiments>2</experiments>
</comment>
<comment type="interaction">
    <interactant intactId="EBI-3385283">
        <id>Q9Y3D6</id>
    </interactant>
    <interactant intactId="EBI-17630288">
        <id>P57054</id>
        <label>PIGP</label>
    </interactant>
    <organismsDiffer>false</organismsDiffer>
    <experiments>3</experiments>
</comment>
<comment type="interaction">
    <interactant intactId="EBI-3385283">
        <id>Q9Y3D6</id>
    </interactant>
    <interactant intactId="EBI-18397230">
        <id>Q6P5S7</id>
        <label>RNASEK</label>
    </interactant>
    <organismsDiffer>false</organismsDiffer>
    <experiments>3</experiments>
</comment>
<comment type="interaction">
    <interactant intactId="EBI-3385283">
        <id>Q9Y3D6</id>
    </interactant>
    <interactant intactId="EBI-17247926">
        <id>Q9NY72</id>
        <label>SCN3B</label>
    </interactant>
    <organismsDiffer>false</organismsDiffer>
    <experiments>3</experiments>
</comment>
<comment type="interaction">
    <interactant intactId="EBI-3385283">
        <id>Q9Y3D6</id>
    </interactant>
    <interactant intactId="EBI-18159983">
        <id>Q3KNW5</id>
        <label>SLC10A6</label>
    </interactant>
    <organismsDiffer>false</organismsDiffer>
    <experiments>3</experiments>
</comment>
<comment type="interaction">
    <interactant intactId="EBI-3385283">
        <id>Q9Y3D6</id>
    </interactant>
    <interactant intactId="EBI-19141793">
        <id>Q13336-2</id>
        <label>SLC14A1</label>
    </interactant>
    <organismsDiffer>false</organismsDiffer>
    <experiments>3</experiments>
</comment>
<comment type="interaction">
    <interactant intactId="EBI-3385283">
        <id>Q9Y3D6</id>
    </interactant>
    <interactant intactId="EBI-8638294">
        <id>Q9NUH8</id>
        <label>TMEM14B</label>
    </interactant>
    <organismsDiffer>false</organismsDiffer>
    <experiments>3</experiments>
</comment>
<comment type="interaction">
    <interactant intactId="EBI-3385283">
        <id>Q9Y3D6</id>
    </interactant>
    <interactant intactId="EBI-11724433">
        <id>Q6ZT21</id>
        <label>TMPPE</label>
    </interactant>
    <organismsDiffer>false</organismsDiffer>
    <experiments>3</experiments>
</comment>
<comment type="subcellular location">
    <subcellularLocation>
        <location evidence="2 4 5 6">Mitochondrion outer membrane</location>
        <topology evidence="5">Single-pass membrane protein</topology>
    </subcellularLocation>
    <subcellularLocation>
        <location evidence="6">Peroxisome membrane</location>
        <topology evidence="16">Single-pass membrane protein</topology>
    </subcellularLocation>
</comment>
<comment type="domain">
    <text evidence="3 6 7">The C-terminus is required for mitochondrial or peroxisomal localization, while the N-terminus is necessary for mitochondrial or peroxisomal fission, localization and regulation of the interaction with DNM1L.</text>
</comment>
<comment type="PTM">
    <text evidence="8">Ubiquitinated by MARCHF5.</text>
</comment>
<comment type="similarity">
    <text evidence="15">Belongs to the FIS1 family.</text>
</comment>
<reference key="1">
    <citation type="journal article" date="2000" name="Genome Res.">
        <title>Identification of novel human genes evolutionarily conserved in Caenorhabditis elegans by comparative proteomics.</title>
        <authorList>
            <person name="Lai C.-H."/>
            <person name="Chou C.-Y."/>
            <person name="Ch'ang L.-Y."/>
            <person name="Liu C.-S."/>
            <person name="Lin W.-C."/>
        </authorList>
    </citation>
    <scope>NUCLEOTIDE SEQUENCE [LARGE SCALE MRNA]</scope>
</reference>
<reference key="2">
    <citation type="journal article" date="2003" name="Nature">
        <title>The DNA sequence of human chromosome 7.</title>
        <authorList>
            <person name="Hillier L.W."/>
            <person name="Fulton R.S."/>
            <person name="Fulton L.A."/>
            <person name="Graves T.A."/>
            <person name="Pepin K.H."/>
            <person name="Wagner-McPherson C."/>
            <person name="Layman D."/>
            <person name="Maas J."/>
            <person name="Jaeger S."/>
            <person name="Walker R."/>
            <person name="Wylie K."/>
            <person name="Sekhon M."/>
            <person name="Becker M.C."/>
            <person name="O'Laughlin M.D."/>
            <person name="Schaller M.E."/>
            <person name="Fewell G.A."/>
            <person name="Delehaunty K.D."/>
            <person name="Miner T.L."/>
            <person name="Nash W.E."/>
            <person name="Cordes M."/>
            <person name="Du H."/>
            <person name="Sun H."/>
            <person name="Edwards J."/>
            <person name="Bradshaw-Cordum H."/>
            <person name="Ali J."/>
            <person name="Andrews S."/>
            <person name="Isak A."/>
            <person name="Vanbrunt A."/>
            <person name="Nguyen C."/>
            <person name="Du F."/>
            <person name="Lamar B."/>
            <person name="Courtney L."/>
            <person name="Kalicki J."/>
            <person name="Ozersky P."/>
            <person name="Bielicki L."/>
            <person name="Scott K."/>
            <person name="Holmes A."/>
            <person name="Harkins R."/>
            <person name="Harris A."/>
            <person name="Strong C.M."/>
            <person name="Hou S."/>
            <person name="Tomlinson C."/>
            <person name="Dauphin-Kohlberg S."/>
            <person name="Kozlowicz-Reilly A."/>
            <person name="Leonard S."/>
            <person name="Rohlfing T."/>
            <person name="Rock S.M."/>
            <person name="Tin-Wollam A.-M."/>
            <person name="Abbott A."/>
            <person name="Minx P."/>
            <person name="Maupin R."/>
            <person name="Strowmatt C."/>
            <person name="Latreille P."/>
            <person name="Miller N."/>
            <person name="Johnson D."/>
            <person name="Murray J."/>
            <person name="Woessner J.P."/>
            <person name="Wendl M.C."/>
            <person name="Yang S.-P."/>
            <person name="Schultz B.R."/>
            <person name="Wallis J.W."/>
            <person name="Spieth J."/>
            <person name="Bieri T.A."/>
            <person name="Nelson J.O."/>
            <person name="Berkowicz N."/>
            <person name="Wohldmann P.E."/>
            <person name="Cook L.L."/>
            <person name="Hickenbotham M.T."/>
            <person name="Eldred J."/>
            <person name="Williams D."/>
            <person name="Bedell J.A."/>
            <person name="Mardis E.R."/>
            <person name="Clifton S.W."/>
            <person name="Chissoe S.L."/>
            <person name="Marra M.A."/>
            <person name="Raymond C."/>
            <person name="Haugen E."/>
            <person name="Gillett W."/>
            <person name="Zhou Y."/>
            <person name="James R."/>
            <person name="Phelps K."/>
            <person name="Iadanoto S."/>
            <person name="Bubb K."/>
            <person name="Simms E."/>
            <person name="Levy R."/>
            <person name="Clendenning J."/>
            <person name="Kaul R."/>
            <person name="Kent W.J."/>
            <person name="Furey T.S."/>
            <person name="Baertsch R.A."/>
            <person name="Brent M.R."/>
            <person name="Keibler E."/>
            <person name="Flicek P."/>
            <person name="Bork P."/>
            <person name="Suyama M."/>
            <person name="Bailey J.A."/>
            <person name="Portnoy M.E."/>
            <person name="Torrents D."/>
            <person name="Chinwalla A.T."/>
            <person name="Gish W.R."/>
            <person name="Eddy S.R."/>
            <person name="McPherson J.D."/>
            <person name="Olson M.V."/>
            <person name="Eichler E.E."/>
            <person name="Green E.D."/>
            <person name="Waterston R.H."/>
            <person name="Wilson R.K."/>
        </authorList>
    </citation>
    <scope>NUCLEOTIDE SEQUENCE [LARGE SCALE GENOMIC DNA]</scope>
</reference>
<reference key="3">
    <citation type="journal article" date="2004" name="Genome Res.">
        <title>The status, quality, and expansion of the NIH full-length cDNA project: the Mammalian Gene Collection (MGC).</title>
        <authorList>
            <consortium name="The MGC Project Team"/>
        </authorList>
    </citation>
    <scope>NUCLEOTIDE SEQUENCE [LARGE SCALE MRNA]</scope>
    <source>
        <tissue>Pancreas</tissue>
    </source>
</reference>
<reference key="4">
    <citation type="submission" date="2005-06" db="UniProtKB">
        <authorList>
            <person name="Bienvenut W.V."/>
        </authorList>
    </citation>
    <scope>PROTEIN SEQUENCE OF 1-16</scope>
    <scope>ACETYLATION AT MET-1</scope>
    <scope>IDENTIFICATION BY MASS SPECTROMETRY</scope>
    <source>
        <tissue>B-cell lymphoma</tissue>
    </source>
</reference>
<reference key="5">
    <citation type="journal article" date="2003" name="J. Biol. Chem.">
        <title>hFis1, a novel component of the mammalian mitochondrial fission machinery.</title>
        <authorList>
            <person name="James D.I."/>
            <person name="Parone P.A."/>
            <person name="Mattenberger Y."/>
            <person name="Martinou J.-C."/>
        </authorList>
    </citation>
    <scope>FUNCTION</scope>
    <scope>SUBCELLULAR LOCATION</scope>
</reference>
<reference key="6">
    <citation type="journal article" date="2003" name="Mol. Cell. Biol.">
        <title>The mitochondrial protein hFis1 regulates mitochondrial fission in mammalian cells through an interaction with the dynamin-like protein DLP1.</title>
        <authorList>
            <person name="Yoon Y."/>
            <person name="Krueger E.W."/>
            <person name="Oswald B.J."/>
            <person name="McNiven M.A."/>
        </authorList>
    </citation>
    <scope>FUNCTION</scope>
    <scope>INTERACTION WITH DNM1L</scope>
</reference>
<reference key="7">
    <citation type="journal article" date="2004" name="J. Cell Sci.">
        <title>Levels of human Fis1 at the mitochondrial outer membrane regulate mitochondrial morphology.</title>
        <authorList>
            <person name="Stojanovski D."/>
            <person name="Koutsopoulos O.S."/>
            <person name="Okamoto K."/>
            <person name="Ryan M.T."/>
        </authorList>
    </citation>
    <scope>FUNCTION</scope>
    <scope>SUBCELLULAR LOCATION</scope>
    <scope>TOPOLOGY</scope>
    <scope>MUTAGENESIS OF LYS-149 AND LYS-151</scope>
</reference>
<reference key="8">
    <citation type="journal article" date="2005" name="J. Cell Sci.">
        <title>Regulation of mitochondrial fission and apoptosis by the mitochondrial outer membrane protein hFis1.</title>
        <authorList>
            <person name="Yu T."/>
            <person name="Fox R.J."/>
            <person name="Burwell L.S."/>
            <person name="Yoon Y."/>
        </authorList>
    </citation>
    <scope>FUNCTION</scope>
    <scope>INTERACTION WITH DNM1L</scope>
    <scope>MUTAGENESIS OF LEU-14; LEU-42; LEU-58; LEU-77; LEU-91 AND LEU-110</scope>
</reference>
<reference key="9">
    <citation type="journal article" date="2005" name="Mol. Biol. Cell">
        <title>A role for Fis1 in both mitochondrial and peroxisomal fission in mammalian cells.</title>
        <authorList>
            <person name="Koch A."/>
            <person name="Yoon Y."/>
            <person name="Bonekamp N.A."/>
            <person name="McNiven M.A."/>
            <person name="Schrader M."/>
        </authorList>
    </citation>
    <scope>FUNCTION</scope>
    <scope>SUBCELLULAR LOCATION</scope>
</reference>
<reference key="10">
    <citation type="journal article" date="2006" name="EMBO J.">
        <title>A novel mitochondrial ubiquitin ligase plays a critical role in mitochondrial dynamics.</title>
        <authorList>
            <person name="Yonashiro R."/>
            <person name="Ishido S."/>
            <person name="Kyo S."/>
            <person name="Fukuda T."/>
            <person name="Goto E."/>
            <person name="Matsuki Y."/>
            <person name="Ohmura-Hoshino M."/>
            <person name="Sada K."/>
            <person name="Hotta H."/>
            <person name="Yamamura H."/>
            <person name="Inatome R."/>
            <person name="Yanagi S."/>
        </authorList>
    </citation>
    <scope>UBIQUITINATION BY MARCHF5</scope>
    <scope>INTERACTION WITH MARCHF5</scope>
</reference>
<reference key="11">
    <citation type="journal article" date="2009" name="Anal. Chem.">
        <title>Lys-N and trypsin cover complementary parts of the phosphoproteome in a refined SCX-based approach.</title>
        <authorList>
            <person name="Gauci S."/>
            <person name="Helbig A.O."/>
            <person name="Slijper M."/>
            <person name="Krijgsveld J."/>
            <person name="Heck A.J."/>
            <person name="Mohammed S."/>
        </authorList>
    </citation>
    <scope>ACETYLATION [LARGE SCALE ANALYSIS] AT MET-1</scope>
    <scope>IDENTIFICATION BY MASS SPECTROMETRY [LARGE SCALE ANALYSIS]</scope>
</reference>
<reference key="12">
    <citation type="journal article" date="2010" name="J. Cell Sci.">
        <title>PEX11 family members are membrane elongation factors that coordinate peroxisome proliferation and maintenance.</title>
        <authorList>
            <person name="Koch J."/>
            <person name="Pranjic K."/>
            <person name="Huber A."/>
            <person name="Ellinger A."/>
            <person name="Hartig A."/>
            <person name="Kragler F."/>
            <person name="Brocard C."/>
        </authorList>
    </citation>
    <scope>INTERACTION WITH PEX11A; PEX11B AND PEX11G</scope>
</reference>
<reference key="13">
    <citation type="journal article" date="2011" name="BMC Syst. Biol.">
        <title>Initial characterization of the human central proteome.</title>
        <authorList>
            <person name="Burkard T.R."/>
            <person name="Planyavsky M."/>
            <person name="Kaupe I."/>
            <person name="Breitwieser F.P."/>
            <person name="Buerckstuemmer T."/>
            <person name="Bennett K.L."/>
            <person name="Superti-Furga G."/>
            <person name="Colinge J."/>
        </authorList>
    </citation>
    <scope>IDENTIFICATION BY MASS SPECTROMETRY [LARGE SCALE ANALYSIS]</scope>
</reference>
<reference key="14">
    <citation type="journal article" date="2011" name="EMBO J.">
        <title>Human MIEF1 recruits Drp1 to mitochondrial outer membranes and promotes mitochondrial fusion rather than fission.</title>
        <authorList>
            <person name="Zhao J."/>
            <person name="Liu T."/>
            <person name="Jin S."/>
            <person name="Wang X."/>
            <person name="Qu M."/>
            <person name="Uhlen P."/>
            <person name="Tomilin N."/>
            <person name="Shupliakov O."/>
            <person name="Lendahl U."/>
            <person name="Nister M."/>
        </authorList>
    </citation>
    <scope>INTERACTION WITH MIEF1</scope>
</reference>
<reference key="15">
    <citation type="journal article" date="2013" name="J. Biol. Chem.">
        <title>MiD49 and MiD51 can act independently of Mff and Fis1 in Drp1 recruitment and are specific for mitochondrial fission.</title>
        <authorList>
            <person name="Palmer C.S."/>
            <person name="Elgass K.D."/>
            <person name="Parton R.G."/>
            <person name="Osellame L.D."/>
            <person name="Stojanovski D."/>
            <person name="Ryan M.T."/>
        </authorList>
    </citation>
    <scope>SUBCELLULAR LOCATION</scope>
</reference>
<reference key="16">
    <citation type="journal article" date="2013" name="Mol. Biol. Cell">
        <title>Fis1, Mff, MiD49, and MiD51 mediate Drp1 recruitment in mitochondrial fission.</title>
        <authorList>
            <person name="Loson O.C."/>
            <person name="Song Z."/>
            <person name="Chen H."/>
            <person name="Chan D.C."/>
        </authorList>
    </citation>
    <scope>FUNCTION</scope>
</reference>
<reference key="17">
    <citation type="journal article" date="2013" name="Proc. Natl. Acad. Sci. U.S.A.">
        <title>Interchangeable adaptors regulate mitochondrial dynamin assembly for membrane scission.</title>
        <authorList>
            <person name="Koirala S."/>
            <person name="Guo Q."/>
            <person name="Kalia R."/>
            <person name="Bui H.T."/>
            <person name="Eckert D.M."/>
            <person name="Frost A."/>
            <person name="Shaw J.M."/>
        </authorList>
    </citation>
    <scope>FUNCTION</scope>
</reference>
<reference key="18">
    <citation type="journal article" date="2014" name="J. Proteomics">
        <title>An enzyme assisted RP-RPLC approach for in-depth analysis of human liver phosphoproteome.</title>
        <authorList>
            <person name="Bian Y."/>
            <person name="Song C."/>
            <person name="Cheng K."/>
            <person name="Dong M."/>
            <person name="Wang F."/>
            <person name="Huang J."/>
            <person name="Sun D."/>
            <person name="Wang L."/>
            <person name="Ye M."/>
            <person name="Zou H."/>
        </authorList>
    </citation>
    <scope>PHOSPHORYLATION [LARGE SCALE ANALYSIS] AT SER-10</scope>
    <scope>IDENTIFICATION BY MASS SPECTROMETRY [LARGE SCALE ANALYSIS]</scope>
    <source>
        <tissue>Liver</tissue>
    </source>
</reference>
<reference key="19">
    <citation type="journal article" date="2015" name="Proteomics">
        <title>N-terminome analysis of the human mitochondrial proteome.</title>
        <authorList>
            <person name="Vaca Jacome A.S."/>
            <person name="Rabilloud T."/>
            <person name="Schaeffer-Reiss C."/>
            <person name="Rompais M."/>
            <person name="Ayoub D."/>
            <person name="Lane L."/>
            <person name="Bairoch A."/>
            <person name="Van Dorsselaer A."/>
            <person name="Carapito C."/>
        </authorList>
    </citation>
    <scope>ACETYLATION [LARGE SCALE ANALYSIS] AT MET-1</scope>
    <scope>IDENTIFICATION BY MASS SPECTROMETRY [LARGE SCALE ANALYSIS]</scope>
</reference>
<reference key="20">
    <citation type="journal article" date="2004" name="Proteins">
        <title>Cytosolic domain of the human mitochondrial fission protein fis1 adopts a TPR fold.</title>
        <authorList>
            <person name="Dohm J.A."/>
            <person name="Lee S.J."/>
            <person name="Hardwick J.M."/>
            <person name="Hill R.B."/>
            <person name="Gittis A.G."/>
        </authorList>
    </citation>
    <scope>X-RAY CRYSTALLOGRAPHY (2.0 ANGSTROMS) OF 1-123</scope>
</reference>
<reference key="21">
    <citation type="journal article" date="2003" name="J. Mol. Biol.">
        <title>The solution structure of human mitochondria fission protein Fis1 reveals a novel TPR-like helix bundle.</title>
        <authorList>
            <person name="Suzuki M."/>
            <person name="Jeong S.-Y."/>
            <person name="Karbowski M."/>
            <person name="Youle R.J."/>
            <person name="Tjandra N."/>
        </authorList>
    </citation>
    <scope>STRUCTURE BY NMR</scope>
    <scope>SUBCELLULAR LOCATION</scope>
</reference>
<reference key="22">
    <citation type="journal article" date="2014" name="Mol. Biol. Cell">
        <title>Mutations in Fis1 disrupt orderly disposal of defective mitochondria.</title>
        <authorList>
            <person name="Shen Q."/>
            <person name="Yamano K."/>
            <person name="Head B.P."/>
            <person name="Kawajiri S."/>
            <person name="Cheung J.T."/>
            <person name="Wang C."/>
            <person name="Cho J.H."/>
            <person name="Hattori N."/>
            <person name="Youle R.J."/>
            <person name="van der Bliek A.M."/>
        </authorList>
    </citation>
    <scope>FUNCTION</scope>
    <scope>INTERACTION WITH DNM1L</scope>
</reference>
<proteinExistence type="evidence at protein level"/>
<keyword id="KW-0002">3D-structure</keyword>
<keyword id="KW-0007">Acetylation</keyword>
<keyword id="KW-0053">Apoptosis</keyword>
<keyword id="KW-0903">Direct protein sequencing</keyword>
<keyword id="KW-0472">Membrane</keyword>
<keyword id="KW-0496">Mitochondrion</keyword>
<keyword id="KW-1000">Mitochondrion outer membrane</keyword>
<keyword id="KW-0576">Peroxisome</keyword>
<keyword id="KW-0597">Phosphoprotein</keyword>
<keyword id="KW-1267">Proteomics identification</keyword>
<keyword id="KW-1185">Reference proteome</keyword>
<keyword id="KW-0802">TPR repeat</keyword>
<keyword id="KW-0812">Transmembrane</keyword>
<keyword id="KW-1133">Transmembrane helix</keyword>
<keyword id="KW-0832">Ubl conjugation</keyword>
<gene>
    <name type="primary">FIS1</name>
    <name type="synonym">TTC11</name>
    <name type="ORF">CGI-135</name>
</gene>
<protein>
    <recommendedName>
        <fullName>Mitochondrial fission 1 protein</fullName>
    </recommendedName>
    <alternativeName>
        <fullName>FIS1 homolog</fullName>
        <shortName>hFis1</shortName>
    </alternativeName>
    <alternativeName>
        <fullName>Tetratricopeptide repeat protein 11</fullName>
        <shortName>TPR repeat protein 11</shortName>
    </alternativeName>
</protein>
<accession>Q9Y3D6</accession>
<accession>Q9BTP3</accession>
<sequence>MEAVLNELVSVEDLLKFEKKFQSEKAAGSVSKSTQFEYAWCLVRSKYNDDIRKGIVLLEELLPKGSKEEQRDYVFYLAVGNYRLKEYEKALKYVRGLLQTEPQNNQAKELERLIDKAMKKDGLVGMAIVGGMALGVAGLAGLIGLAVSKSKS</sequence>
<dbReference type="EMBL" id="AF151893">
    <property type="protein sequence ID" value="AAD34130.1"/>
    <property type="molecule type" value="mRNA"/>
</dbReference>
<dbReference type="EMBL" id="AC006329">
    <property type="protein sequence ID" value="AAP22366.1"/>
    <property type="molecule type" value="Genomic_DNA"/>
</dbReference>
<dbReference type="EMBL" id="BC003540">
    <property type="protein sequence ID" value="AAH03540.1"/>
    <property type="molecule type" value="mRNA"/>
</dbReference>
<dbReference type="EMBL" id="BC009428">
    <property type="protein sequence ID" value="AAH09428.1"/>
    <property type="molecule type" value="mRNA"/>
</dbReference>
<dbReference type="CCDS" id="CCDS43626.1"/>
<dbReference type="RefSeq" id="NP_057152.2">
    <property type="nucleotide sequence ID" value="NM_016068.3"/>
</dbReference>
<dbReference type="PDB" id="1NZN">
    <property type="method" value="X-ray"/>
    <property type="resolution" value="2.00 A"/>
    <property type="chains" value="A=1-123"/>
</dbReference>
<dbReference type="PDB" id="1PC2">
    <property type="method" value="NMR"/>
    <property type="chains" value="A=1-145"/>
</dbReference>
<dbReference type="PDB" id="7YA9">
    <property type="method" value="X-ray"/>
    <property type="resolution" value="1.70 A"/>
    <property type="chains" value="A=1-123"/>
</dbReference>
<dbReference type="PDB" id="7YKA">
    <property type="method" value="X-ray"/>
    <property type="resolution" value="2.30 A"/>
    <property type="chains" value="A=2-119, B=2-123"/>
</dbReference>
<dbReference type="PDB" id="8U1Z">
    <property type="method" value="X-ray"/>
    <property type="resolution" value="1.85 A"/>
    <property type="chains" value="A=1-125"/>
</dbReference>
<dbReference type="PDB" id="8XWX">
    <property type="method" value="X-ray"/>
    <property type="resolution" value="2.69 A"/>
    <property type="chains" value="A/B/C=1-123"/>
</dbReference>
<dbReference type="PDBsum" id="1NZN"/>
<dbReference type="PDBsum" id="1PC2"/>
<dbReference type="PDBsum" id="7YA9"/>
<dbReference type="PDBsum" id="7YKA"/>
<dbReference type="PDBsum" id="8U1Z"/>
<dbReference type="PDBsum" id="8XWX"/>
<dbReference type="SMR" id="Q9Y3D6"/>
<dbReference type="BioGRID" id="119230">
    <property type="interactions" value="229"/>
</dbReference>
<dbReference type="CORUM" id="Q9Y3D6"/>
<dbReference type="FunCoup" id="Q9Y3D6">
    <property type="interactions" value="1986"/>
</dbReference>
<dbReference type="IntAct" id="Q9Y3D6">
    <property type="interactions" value="71"/>
</dbReference>
<dbReference type="MINT" id="Q9Y3D6"/>
<dbReference type="STRING" id="9606.ENSP00000223136"/>
<dbReference type="iPTMnet" id="Q9Y3D6"/>
<dbReference type="PhosphoSitePlus" id="Q9Y3D6"/>
<dbReference type="SwissPalm" id="Q9Y3D6"/>
<dbReference type="BioMuta" id="FIS1"/>
<dbReference type="DMDM" id="33112470"/>
<dbReference type="jPOST" id="Q9Y3D6"/>
<dbReference type="MassIVE" id="Q9Y3D6"/>
<dbReference type="PaxDb" id="9606-ENSP00000223136"/>
<dbReference type="PeptideAtlas" id="Q9Y3D6"/>
<dbReference type="ProteomicsDB" id="86022"/>
<dbReference type="Pumba" id="Q9Y3D6"/>
<dbReference type="TopDownProteomics" id="Q9Y3D6"/>
<dbReference type="Antibodypedia" id="2313">
    <property type="antibodies" value="379 antibodies from 38 providers"/>
</dbReference>
<dbReference type="DNASU" id="51024"/>
<dbReference type="Ensembl" id="ENST00000223136.5">
    <property type="protein sequence ID" value="ENSP00000223136.4"/>
    <property type="gene ID" value="ENSG00000214253.9"/>
</dbReference>
<dbReference type="GeneID" id="51024"/>
<dbReference type="KEGG" id="hsa:51024"/>
<dbReference type="MANE-Select" id="ENST00000223136.5">
    <property type="protein sequence ID" value="ENSP00000223136.4"/>
    <property type="RefSeq nucleotide sequence ID" value="NM_016068.3"/>
    <property type="RefSeq protein sequence ID" value="NP_057152.2"/>
</dbReference>
<dbReference type="UCSC" id="uc003uyj.5">
    <property type="organism name" value="human"/>
</dbReference>
<dbReference type="AGR" id="HGNC:21689"/>
<dbReference type="CTD" id="51024"/>
<dbReference type="DisGeNET" id="51024"/>
<dbReference type="GeneCards" id="FIS1"/>
<dbReference type="HGNC" id="HGNC:21689">
    <property type="gene designation" value="FIS1"/>
</dbReference>
<dbReference type="HPA" id="ENSG00000214253">
    <property type="expression patterns" value="Low tissue specificity"/>
</dbReference>
<dbReference type="MIM" id="609003">
    <property type="type" value="gene"/>
</dbReference>
<dbReference type="neXtProt" id="NX_Q9Y3D6"/>
<dbReference type="OpenTargets" id="ENSG00000214253"/>
<dbReference type="PharmGKB" id="PA134984211"/>
<dbReference type="VEuPathDB" id="HostDB:ENSG00000214253"/>
<dbReference type="eggNOG" id="KOG3364">
    <property type="taxonomic scope" value="Eukaryota"/>
</dbReference>
<dbReference type="GeneTree" id="ENSGT00390000000592"/>
<dbReference type="HOGENOM" id="CLU_104368_1_0_1"/>
<dbReference type="InParanoid" id="Q9Y3D6"/>
<dbReference type="OMA" id="QFNYAWG"/>
<dbReference type="PAN-GO" id="Q9Y3D6">
    <property type="GO annotations" value="6 GO annotations based on evolutionary models"/>
</dbReference>
<dbReference type="PhylomeDB" id="Q9Y3D6"/>
<dbReference type="TreeFam" id="TF315180"/>
<dbReference type="PathwayCommons" id="Q9Y3D6"/>
<dbReference type="Reactome" id="R-HSA-9603798">
    <property type="pathway name" value="Class I peroxisomal membrane protein import"/>
</dbReference>
<dbReference type="SignaLink" id="Q9Y3D6"/>
<dbReference type="SIGNOR" id="Q9Y3D6"/>
<dbReference type="BioGRID-ORCS" id="51024">
    <property type="hits" value="185 hits in 1157 CRISPR screens"/>
</dbReference>
<dbReference type="ChiTaRS" id="FIS1">
    <property type="organism name" value="human"/>
</dbReference>
<dbReference type="EvolutionaryTrace" id="Q9Y3D6"/>
<dbReference type="GeneWiki" id="FIS1"/>
<dbReference type="GenomeRNAi" id="51024"/>
<dbReference type="Pharos" id="Q9Y3D6">
    <property type="development level" value="Tbio"/>
</dbReference>
<dbReference type="PRO" id="PR:Q9Y3D6"/>
<dbReference type="Proteomes" id="UP000005640">
    <property type="component" value="Chromosome 7"/>
</dbReference>
<dbReference type="RNAct" id="Q9Y3D6">
    <property type="molecule type" value="protein"/>
</dbReference>
<dbReference type="Bgee" id="ENSG00000214253">
    <property type="expression patterns" value="Expressed in C1 segment of cervical spinal cord and 200 other cell types or tissues"/>
</dbReference>
<dbReference type="ExpressionAtlas" id="Q9Y3D6">
    <property type="expression patterns" value="baseline and differential"/>
</dbReference>
<dbReference type="GO" id="GO:0005829">
    <property type="term" value="C:cytosol"/>
    <property type="evidence" value="ECO:0000304"/>
    <property type="project" value="Reactome"/>
</dbReference>
<dbReference type="GO" id="GO:0016020">
    <property type="term" value="C:membrane"/>
    <property type="evidence" value="ECO:0007005"/>
    <property type="project" value="UniProtKB"/>
</dbReference>
<dbReference type="GO" id="GO:0005741">
    <property type="term" value="C:mitochondrial outer membrane"/>
    <property type="evidence" value="ECO:0000314"/>
    <property type="project" value="UniProtKB"/>
</dbReference>
<dbReference type="GO" id="GO:0005739">
    <property type="term" value="C:mitochondrion"/>
    <property type="evidence" value="ECO:0000314"/>
    <property type="project" value="UniProtKB"/>
</dbReference>
<dbReference type="GO" id="GO:0005778">
    <property type="term" value="C:peroxisomal membrane"/>
    <property type="evidence" value="ECO:0000314"/>
    <property type="project" value="UniProtKB"/>
</dbReference>
<dbReference type="GO" id="GO:0005777">
    <property type="term" value="C:peroxisome"/>
    <property type="evidence" value="ECO:0000314"/>
    <property type="project" value="UniProtKB"/>
</dbReference>
<dbReference type="GO" id="GO:0032991">
    <property type="term" value="C:protein-containing complex"/>
    <property type="evidence" value="ECO:0000314"/>
    <property type="project" value="UniProtKB"/>
</dbReference>
<dbReference type="GO" id="GO:0042802">
    <property type="term" value="F:identical protein binding"/>
    <property type="evidence" value="ECO:0000353"/>
    <property type="project" value="UniProtKB"/>
</dbReference>
<dbReference type="GO" id="GO:0008289">
    <property type="term" value="F:lipid binding"/>
    <property type="evidence" value="ECO:0000269"/>
    <property type="project" value="DisProt"/>
</dbReference>
<dbReference type="GO" id="GO:0060090">
    <property type="term" value="F:molecular adaptor activity"/>
    <property type="evidence" value="ECO:0000269"/>
    <property type="project" value="DisProt"/>
</dbReference>
<dbReference type="GO" id="GO:0071333">
    <property type="term" value="P:cellular response to glucose stimulus"/>
    <property type="evidence" value="ECO:0007669"/>
    <property type="project" value="Ensembl"/>
</dbReference>
<dbReference type="GO" id="GO:0071396">
    <property type="term" value="P:cellular response to lipid"/>
    <property type="evidence" value="ECO:0007669"/>
    <property type="project" value="Ensembl"/>
</dbReference>
<dbReference type="GO" id="GO:1901653">
    <property type="term" value="P:cellular response to peptide"/>
    <property type="evidence" value="ECO:0007669"/>
    <property type="project" value="Ensembl"/>
</dbReference>
<dbReference type="GO" id="GO:0097237">
    <property type="term" value="P:cellular response to toxic substance"/>
    <property type="evidence" value="ECO:0007669"/>
    <property type="project" value="Ensembl"/>
</dbReference>
<dbReference type="GO" id="GO:0000266">
    <property type="term" value="P:mitochondrial fission"/>
    <property type="evidence" value="ECO:0000314"/>
    <property type="project" value="UniProtKB"/>
</dbReference>
<dbReference type="GO" id="GO:0043653">
    <property type="term" value="P:mitochondrial fragmentation involved in apoptotic process"/>
    <property type="evidence" value="ECO:0007669"/>
    <property type="project" value="Ensembl"/>
</dbReference>
<dbReference type="GO" id="GO:0007005">
    <property type="term" value="P:mitochondrion organization"/>
    <property type="evidence" value="ECO:0000315"/>
    <property type="project" value="UniProtKB"/>
</dbReference>
<dbReference type="GO" id="GO:1903579">
    <property type="term" value="P:negative regulation of ATP metabolic process"/>
    <property type="evidence" value="ECO:0000315"/>
    <property type="project" value="ARUK-UCL"/>
</dbReference>
<dbReference type="GO" id="GO:2000192">
    <property type="term" value="P:negative regulation of fatty acid transport"/>
    <property type="evidence" value="ECO:0000315"/>
    <property type="project" value="ARUK-UCL"/>
</dbReference>
<dbReference type="GO" id="GO:0016559">
    <property type="term" value="P:peroxisome fission"/>
    <property type="evidence" value="ECO:0000314"/>
    <property type="project" value="UniProtKB"/>
</dbReference>
<dbReference type="GO" id="GO:2001244">
    <property type="term" value="P:positive regulation of intrinsic apoptotic signaling pathway"/>
    <property type="evidence" value="ECO:0000315"/>
    <property type="project" value="UniProtKB"/>
</dbReference>
<dbReference type="GO" id="GO:0090141">
    <property type="term" value="P:positive regulation of mitochondrial fission"/>
    <property type="evidence" value="ECO:0007669"/>
    <property type="project" value="Ensembl"/>
</dbReference>
<dbReference type="GO" id="GO:0043525">
    <property type="term" value="P:positive regulation of neuron apoptotic process"/>
    <property type="evidence" value="ECO:0007669"/>
    <property type="project" value="Ensembl"/>
</dbReference>
<dbReference type="GO" id="GO:0006626">
    <property type="term" value="P:protein targeting to mitochondrion"/>
    <property type="evidence" value="ECO:0000315"/>
    <property type="project" value="UniProtKB"/>
</dbReference>
<dbReference type="GO" id="GO:0034976">
    <property type="term" value="P:response to endoplasmic reticulum stress"/>
    <property type="evidence" value="ECO:0007669"/>
    <property type="project" value="Ensembl"/>
</dbReference>
<dbReference type="GO" id="GO:1905395">
    <property type="term" value="P:response to flavonoid"/>
    <property type="evidence" value="ECO:0007669"/>
    <property type="project" value="Ensembl"/>
</dbReference>
<dbReference type="GO" id="GO:1902617">
    <property type="term" value="P:response to fluoride"/>
    <property type="evidence" value="ECO:0007669"/>
    <property type="project" value="Ensembl"/>
</dbReference>
<dbReference type="GO" id="GO:1990910">
    <property type="term" value="P:response to hypobaric hypoxia"/>
    <property type="evidence" value="ECO:0007669"/>
    <property type="project" value="Ensembl"/>
</dbReference>
<dbReference type="GO" id="GO:0014850">
    <property type="term" value="P:response to muscle activity"/>
    <property type="evidence" value="ECO:0007669"/>
    <property type="project" value="Ensembl"/>
</dbReference>
<dbReference type="GO" id="GO:0031667">
    <property type="term" value="P:response to nutrient levels"/>
    <property type="evidence" value="ECO:0007669"/>
    <property type="project" value="Ensembl"/>
</dbReference>
<dbReference type="CDD" id="cd12212">
    <property type="entry name" value="Fis1"/>
    <property type="match status" value="1"/>
</dbReference>
<dbReference type="DisProt" id="DP00457"/>
<dbReference type="FunFam" id="1.25.40.10:FF:000147">
    <property type="entry name" value="Mitochondrial fission 1 protein"/>
    <property type="match status" value="1"/>
</dbReference>
<dbReference type="Gene3D" id="1.25.40.10">
    <property type="entry name" value="Tetratricopeptide repeat domain"/>
    <property type="match status" value="1"/>
</dbReference>
<dbReference type="InterPro" id="IPR016543">
    <property type="entry name" value="Fis1"/>
</dbReference>
<dbReference type="InterPro" id="IPR033745">
    <property type="entry name" value="Fis1_cytosol"/>
</dbReference>
<dbReference type="InterPro" id="IPR028061">
    <property type="entry name" value="Fis1_TPR_C"/>
</dbReference>
<dbReference type="InterPro" id="IPR028058">
    <property type="entry name" value="Fis1_TPR_N"/>
</dbReference>
<dbReference type="InterPro" id="IPR011990">
    <property type="entry name" value="TPR-like_helical_dom_sf"/>
</dbReference>
<dbReference type="PANTHER" id="PTHR13247:SF0">
    <property type="entry name" value="MITOCHONDRIAL FISSION 1 PROTEIN"/>
    <property type="match status" value="1"/>
</dbReference>
<dbReference type="PANTHER" id="PTHR13247">
    <property type="entry name" value="TETRATRICOPEPTIDE REPEAT PROTEIN 11 TPR REPEAT PROTEIN 11"/>
    <property type="match status" value="1"/>
</dbReference>
<dbReference type="Pfam" id="PF14853">
    <property type="entry name" value="Fis1_TPR_C"/>
    <property type="match status" value="1"/>
</dbReference>
<dbReference type="Pfam" id="PF14852">
    <property type="entry name" value="Fis1_TPR_N"/>
    <property type="match status" value="1"/>
</dbReference>
<dbReference type="PIRSF" id="PIRSF008835">
    <property type="entry name" value="TPR_repeat_11_Fis1"/>
    <property type="match status" value="1"/>
</dbReference>
<dbReference type="SUPFAM" id="SSF48452">
    <property type="entry name" value="TPR-like"/>
    <property type="match status" value="1"/>
</dbReference>
<evidence type="ECO:0000255" key="1"/>
<evidence type="ECO:0000269" key="2">
    <source>
    </source>
</evidence>
<evidence type="ECO:0000269" key="3">
    <source>
    </source>
</evidence>
<evidence type="ECO:0000269" key="4">
    <source>
    </source>
</evidence>
<evidence type="ECO:0000269" key="5">
    <source>
    </source>
</evidence>
<evidence type="ECO:0000269" key="6">
    <source>
    </source>
</evidence>
<evidence type="ECO:0000269" key="7">
    <source>
    </source>
</evidence>
<evidence type="ECO:0000269" key="8">
    <source>
    </source>
</evidence>
<evidence type="ECO:0000269" key="9">
    <source>
    </source>
</evidence>
<evidence type="ECO:0000269" key="10">
    <source>
    </source>
</evidence>
<evidence type="ECO:0000269" key="11">
    <source>
    </source>
</evidence>
<evidence type="ECO:0000269" key="12">
    <source>
    </source>
</evidence>
<evidence type="ECO:0000269" key="13">
    <source>
    </source>
</evidence>
<evidence type="ECO:0000269" key="14">
    <source ref="4"/>
</evidence>
<evidence type="ECO:0000305" key="15"/>
<evidence type="ECO:0000305" key="16">
    <source>
    </source>
</evidence>
<evidence type="ECO:0007744" key="17">
    <source>
    </source>
</evidence>
<evidence type="ECO:0007744" key="18">
    <source>
    </source>
</evidence>
<evidence type="ECO:0007744" key="19">
    <source>
    </source>
</evidence>
<evidence type="ECO:0007829" key="20">
    <source>
        <dbReference type="PDB" id="1PC2"/>
    </source>
</evidence>
<evidence type="ECO:0007829" key="21">
    <source>
        <dbReference type="PDB" id="7YA9"/>
    </source>
</evidence>